<feature type="chain" id="PRO_0000210454" description="Uncharacterized protein MG208">
    <location>
        <begin position="1"/>
        <end position="196"/>
    </location>
</feature>
<feature type="sequence conflict" description="In Ref. 2." evidence="1" ref="2">
    <original>IEDP</original>
    <variation>TKIL</variation>
    <location>
        <begin position="180"/>
        <end position="183"/>
    </location>
</feature>
<protein>
    <recommendedName>
        <fullName>Uncharacterized protein MG208</fullName>
    </recommendedName>
</protein>
<accession>P47450</accession>
<accession>Q49234</accession>
<gene>
    <name type="ordered locus">MG208</name>
</gene>
<dbReference type="EMBL" id="L43967">
    <property type="protein sequence ID" value="AAC71426.1"/>
    <property type="molecule type" value="Genomic_DNA"/>
</dbReference>
<dbReference type="EMBL" id="U01785">
    <property type="protein sequence ID" value="AAD10606.1"/>
    <property type="molecule type" value="Genomic_DNA"/>
</dbReference>
<dbReference type="PIR" id="I64222">
    <property type="entry name" value="I64222"/>
</dbReference>
<dbReference type="RefSeq" id="WP_009885745.1">
    <property type="nucleotide sequence ID" value="NC_000908.2"/>
</dbReference>
<dbReference type="SMR" id="P47450"/>
<dbReference type="FunCoup" id="P47450">
    <property type="interactions" value="127"/>
</dbReference>
<dbReference type="STRING" id="243273.MG_208"/>
<dbReference type="GeneID" id="88282340"/>
<dbReference type="KEGG" id="mge:MG_208"/>
<dbReference type="eggNOG" id="COG1214">
    <property type="taxonomic scope" value="Bacteria"/>
</dbReference>
<dbReference type="HOGENOM" id="CLU_064886_0_2_14"/>
<dbReference type="InParanoid" id="P47450"/>
<dbReference type="OrthoDB" id="9784166at2"/>
<dbReference type="BioCyc" id="MGEN243273:G1GJ2-241-MONOMER"/>
<dbReference type="Proteomes" id="UP000000807">
    <property type="component" value="Chromosome"/>
</dbReference>
<dbReference type="GO" id="GO:0002949">
    <property type="term" value="P:tRNA threonylcarbamoyladenosine modification"/>
    <property type="evidence" value="ECO:0007669"/>
    <property type="project" value="InterPro"/>
</dbReference>
<dbReference type="Gene3D" id="3.30.420.200">
    <property type="match status" value="1"/>
</dbReference>
<dbReference type="Gene3D" id="3.30.420.40">
    <property type="match status" value="1"/>
</dbReference>
<dbReference type="InterPro" id="IPR043129">
    <property type="entry name" value="ATPase_NBD"/>
</dbReference>
<dbReference type="InterPro" id="IPR000905">
    <property type="entry name" value="Gcp-like_dom"/>
</dbReference>
<dbReference type="InterPro" id="IPR022496">
    <property type="entry name" value="T6A_TsaB"/>
</dbReference>
<dbReference type="NCBIfam" id="TIGR03725">
    <property type="entry name" value="T6A_YeaZ"/>
    <property type="match status" value="1"/>
</dbReference>
<dbReference type="Pfam" id="PF00814">
    <property type="entry name" value="TsaD"/>
    <property type="match status" value="1"/>
</dbReference>
<dbReference type="SUPFAM" id="SSF53067">
    <property type="entry name" value="Actin-like ATPase domain"/>
    <property type="match status" value="1"/>
</dbReference>
<proteinExistence type="predicted"/>
<evidence type="ECO:0000305" key="1"/>
<keyword id="KW-1185">Reference proteome</keyword>
<reference key="1">
    <citation type="journal article" date="1995" name="Science">
        <title>The minimal gene complement of Mycoplasma genitalium.</title>
        <authorList>
            <person name="Fraser C.M."/>
            <person name="Gocayne J.D."/>
            <person name="White O."/>
            <person name="Adams M.D."/>
            <person name="Clayton R.A."/>
            <person name="Fleischmann R.D."/>
            <person name="Bult C.J."/>
            <person name="Kerlavage A.R."/>
            <person name="Sutton G.G."/>
            <person name="Kelley J.M."/>
            <person name="Fritchman J.L."/>
            <person name="Weidman J.F."/>
            <person name="Small K.V."/>
            <person name="Sandusky M."/>
            <person name="Fuhrmann J.L."/>
            <person name="Nguyen D.T."/>
            <person name="Utterback T.R."/>
            <person name="Saudek D.M."/>
            <person name="Phillips C.A."/>
            <person name="Merrick J.M."/>
            <person name="Tomb J.-F."/>
            <person name="Dougherty B.A."/>
            <person name="Bott K.F."/>
            <person name="Hu P.-C."/>
            <person name="Lucier T.S."/>
            <person name="Peterson S.N."/>
            <person name="Smith H.O."/>
            <person name="Hutchison C.A. III"/>
            <person name="Venter J.C."/>
        </authorList>
    </citation>
    <scope>NUCLEOTIDE SEQUENCE [LARGE SCALE GENOMIC DNA]</scope>
    <source>
        <strain>ATCC 33530 / DSM 19775 / NCTC 10195 / G37</strain>
    </source>
</reference>
<reference key="2">
    <citation type="journal article" date="1993" name="J. Bacteriol.">
        <title>A survey of the Mycoplasma genitalium genome by using random sequencing.</title>
        <authorList>
            <person name="Peterson S.N."/>
            <person name="Hu P.-C."/>
            <person name="Bott K.F."/>
            <person name="Hutchison C.A. III"/>
        </authorList>
    </citation>
    <scope>NUCLEOTIDE SEQUENCE [GENOMIC DNA] OF 55-183</scope>
    <source>
        <strain>ATCC 33530 / DSM 19775 / NCTC 10195 / G37</strain>
    </source>
</reference>
<name>Y208_MYCGE</name>
<organism>
    <name type="scientific">Mycoplasma genitalium (strain ATCC 33530 / DSM 19775 / NCTC 10195 / G37)</name>
    <name type="common">Mycoplasmoides genitalium</name>
    <dbReference type="NCBI Taxonomy" id="243273"/>
    <lineage>
        <taxon>Bacteria</taxon>
        <taxon>Bacillati</taxon>
        <taxon>Mycoplasmatota</taxon>
        <taxon>Mycoplasmoidales</taxon>
        <taxon>Mycoplasmoidaceae</taxon>
        <taxon>Mycoplasmoides</taxon>
    </lineage>
</organism>
<sequence length="196" mass="22535">MFFLSKYKLFLDCAYKTLNIIILEMKTNAVVDELSIGVEQNLTELAVYYLETMLTKNKLKKSSIKQFYVTIGPGSFTGQRIATIIAKSWCLLYPSCELYALNSLRFQIPYEHGISKISCGNDQNYCGLYSQTTSEIKLISKADFVKLCKANNELPMYENFENIESYSKLLLSNIDHFERIEDPLTLQPIYLKDPVN</sequence>